<evidence type="ECO:0000250" key="1">
    <source>
        <dbReference type="UniProtKB" id="P08067"/>
    </source>
</evidence>
<evidence type="ECO:0000255" key="2"/>
<evidence type="ECO:0000255" key="3">
    <source>
        <dbReference type="PROSITE-ProRule" id="PRU00628"/>
    </source>
</evidence>
<evidence type="ECO:0000305" key="4"/>
<comment type="function">
    <text evidence="1">Component of the ubiquinol-cytochrome c oxidoreductase, a multisubunit transmembrane complex that is part of the mitochondrial electron transport chain which drives oxidative phosphorylation. The respiratory chain contains 3 multisubunit complexes succinate dehydrogenase (complex II, CII), ubiquinol-cytochrome c oxidoreductase (cytochrome b-c1 complex, complex III, CIII) and cytochrome c oxidase (complex IV, CIV), that cooperate to transfer electrons derived from NADH and succinate to molecular oxygen, creating an electrochemical gradient over the inner membrane that drives transmembrane transport and the ATP synthase. The cytochrome b-c1 complex catalyzes electron transfer from ubiquinol to cytochrome c, linking this redox reaction to translocation of protons across the mitochondrial inner membrane, with protons being carried across the membrane as hydrogens on the quinol. In the process called Q cycle, 2 protons are consumed from the matrix, 4 protons are released into the intermembrane space and 2 electrons are passed to cytochrome c. The Rieske protein is a catalytic core subunit containing a [2Fe-2S] iron-sulfur cluster. It cycles between 2 conformational states during catalysis to transfer electrons from the quinol bound in the Q(0) site in cytochrome b to cytochrome c1.</text>
</comment>
<comment type="catalytic activity">
    <reaction evidence="1">
        <text>a quinol + 2 Fe(III)-[cytochrome c](out) = a quinone + 2 Fe(II)-[cytochrome c](out) + 2 H(+)(out)</text>
        <dbReference type="Rhea" id="RHEA:11484"/>
        <dbReference type="Rhea" id="RHEA-COMP:10350"/>
        <dbReference type="Rhea" id="RHEA-COMP:14399"/>
        <dbReference type="ChEBI" id="CHEBI:15378"/>
        <dbReference type="ChEBI" id="CHEBI:24646"/>
        <dbReference type="ChEBI" id="CHEBI:29033"/>
        <dbReference type="ChEBI" id="CHEBI:29034"/>
        <dbReference type="ChEBI" id="CHEBI:132124"/>
        <dbReference type="EC" id="7.1.1.8"/>
    </reaction>
</comment>
<comment type="cofactor">
    <cofactor evidence="3">
        <name>[2Fe-2S] cluster</name>
        <dbReference type="ChEBI" id="CHEBI:190135"/>
    </cofactor>
    <text evidence="3">Binds 1 [2Fe-2S] cluster per subunit.</text>
</comment>
<comment type="subunit">
    <text evidence="1">Component of the ubiquinol-cytochrome c oxidoreductase (cytochrome b-c1 complex, complex III, CIII), a multisubunit enzyme composed of 3 respiratory subunits cytochrome b, cytochrome c1 and Rieske protein, 2 core protein subunits, and several low-molecular weight protein subunits. The complex exists as an obligatory dimer and forms supercomplexes (SCs) in the inner mitochondrial membrane with cytochrome c oxidase (complex IV, CIV).</text>
</comment>
<comment type="subcellular location">
    <subcellularLocation>
        <location evidence="1">Mitochondrion inner membrane</location>
        <topology evidence="1">Single-pass membrane protein</topology>
    </subcellularLocation>
</comment>
<comment type="tissue specificity">
    <text>High levels are seen in the flowers while a low level expression is seen in the roots, leaves and stems.</text>
</comment>
<comment type="miscellaneous">
    <text>The Rieske protein is a high potential 2Fe-2S protein.</text>
</comment>
<comment type="similarity">
    <text evidence="4">Belongs to the Rieske iron-sulfur protein family.</text>
</comment>
<keyword id="KW-0001">2Fe-2S</keyword>
<keyword id="KW-1015">Disulfide bond</keyword>
<keyword id="KW-0249">Electron transport</keyword>
<keyword id="KW-0408">Iron</keyword>
<keyword id="KW-0411">Iron-sulfur</keyword>
<keyword id="KW-0472">Membrane</keyword>
<keyword id="KW-0479">Metal-binding</keyword>
<keyword id="KW-0496">Mitochondrion</keyword>
<keyword id="KW-0999">Mitochondrion inner membrane</keyword>
<keyword id="KW-1185">Reference proteome</keyword>
<keyword id="KW-0679">Respiratory chain</keyword>
<keyword id="KW-0809">Transit peptide</keyword>
<keyword id="KW-1278">Translocase</keyword>
<keyword id="KW-0812">Transmembrane</keyword>
<keyword id="KW-1133">Transmembrane helix</keyword>
<keyword id="KW-0813">Transport</keyword>
<organism>
    <name type="scientific">Nicotiana tabacum</name>
    <name type="common">Common tobacco</name>
    <dbReference type="NCBI Taxonomy" id="4097"/>
    <lineage>
        <taxon>Eukaryota</taxon>
        <taxon>Viridiplantae</taxon>
        <taxon>Streptophyta</taxon>
        <taxon>Embryophyta</taxon>
        <taxon>Tracheophyta</taxon>
        <taxon>Spermatophyta</taxon>
        <taxon>Magnoliopsida</taxon>
        <taxon>eudicotyledons</taxon>
        <taxon>Gunneridae</taxon>
        <taxon>Pentapetalae</taxon>
        <taxon>asterids</taxon>
        <taxon>lamiids</taxon>
        <taxon>Solanales</taxon>
        <taxon>Solanaceae</taxon>
        <taxon>Nicotianoideae</taxon>
        <taxon>Nicotianeae</taxon>
        <taxon>Nicotiana</taxon>
    </lineage>
</organism>
<feature type="transit peptide" description="Mitochondrion" evidence="2">
    <location>
        <begin position="1"/>
        <end position="56"/>
    </location>
</feature>
<feature type="chain" id="PRO_0000030680" description="Cytochrome b-c1 complex subunit Rieske-5, mitochondrial">
    <location>
        <begin position="57"/>
        <end position="268"/>
    </location>
</feature>
<feature type="topological domain" description="Mitochondrial matrix" evidence="4">
    <location>
        <begin position="57"/>
        <end position="105"/>
    </location>
</feature>
<feature type="transmembrane region" description="Helical" evidence="2">
    <location>
        <begin position="106"/>
        <end position="128"/>
    </location>
</feature>
<feature type="topological domain" description="Mitochondrial intermembrane" evidence="4">
    <location>
        <begin position="129"/>
        <end position="268"/>
    </location>
</feature>
<feature type="domain" description="Rieske" evidence="3">
    <location>
        <begin position="178"/>
        <end position="266"/>
    </location>
</feature>
<feature type="binding site" evidence="3">
    <location>
        <position position="211"/>
    </location>
    <ligand>
        <name>[2Fe-2S] cluster</name>
        <dbReference type="ChEBI" id="CHEBI:190135"/>
    </ligand>
</feature>
<feature type="binding site" evidence="3">
    <location>
        <position position="213"/>
    </location>
    <ligand>
        <name>[2Fe-2S] cluster</name>
        <dbReference type="ChEBI" id="CHEBI:190135"/>
    </ligand>
</feature>
<feature type="binding site" evidence="3">
    <location>
        <position position="230"/>
    </location>
    <ligand>
        <name>[2Fe-2S] cluster</name>
        <dbReference type="ChEBI" id="CHEBI:190135"/>
    </ligand>
</feature>
<feature type="binding site" evidence="3">
    <location>
        <position position="233"/>
    </location>
    <ligand>
        <name>[2Fe-2S] cluster</name>
        <dbReference type="ChEBI" id="CHEBI:190135"/>
    </ligand>
</feature>
<feature type="disulfide bond" evidence="3">
    <location>
        <begin position="216"/>
        <end position="232"/>
    </location>
</feature>
<accession>P51135</accession>
<dbReference type="EC" id="7.1.1.8"/>
<dbReference type="EMBL" id="L16813">
    <property type="protein sequence ID" value="AAA20834.1"/>
    <property type="molecule type" value="mRNA"/>
</dbReference>
<dbReference type="PIR" id="T02023">
    <property type="entry name" value="T02023"/>
</dbReference>
<dbReference type="RefSeq" id="NP_001312589.1">
    <property type="nucleotide sequence ID" value="NM_001325660.1"/>
</dbReference>
<dbReference type="SMR" id="P51135"/>
<dbReference type="STRING" id="4097.P51135"/>
<dbReference type="PaxDb" id="4097-P51135"/>
<dbReference type="GeneID" id="107798995"/>
<dbReference type="KEGG" id="nta:107798995"/>
<dbReference type="OMA" id="RYNHERY"/>
<dbReference type="OrthoDB" id="1637982at2759"/>
<dbReference type="PhylomeDB" id="P51135"/>
<dbReference type="Proteomes" id="UP000084051">
    <property type="component" value="Unplaced"/>
</dbReference>
<dbReference type="GO" id="GO:0005743">
    <property type="term" value="C:mitochondrial inner membrane"/>
    <property type="evidence" value="ECO:0007669"/>
    <property type="project" value="UniProtKB-SubCell"/>
</dbReference>
<dbReference type="GO" id="GO:0045275">
    <property type="term" value="C:respiratory chain complex III"/>
    <property type="evidence" value="ECO:0000318"/>
    <property type="project" value="GO_Central"/>
</dbReference>
<dbReference type="GO" id="GO:0051537">
    <property type="term" value="F:2 iron, 2 sulfur cluster binding"/>
    <property type="evidence" value="ECO:0007669"/>
    <property type="project" value="UniProtKB-KW"/>
</dbReference>
<dbReference type="GO" id="GO:0046872">
    <property type="term" value="F:metal ion binding"/>
    <property type="evidence" value="ECO:0007669"/>
    <property type="project" value="UniProtKB-KW"/>
</dbReference>
<dbReference type="GO" id="GO:0016491">
    <property type="term" value="F:oxidoreductase activity"/>
    <property type="evidence" value="ECO:0000318"/>
    <property type="project" value="GO_Central"/>
</dbReference>
<dbReference type="GO" id="GO:0008121">
    <property type="term" value="F:ubiquinol-cytochrome-c reductase activity"/>
    <property type="evidence" value="ECO:0007669"/>
    <property type="project" value="UniProtKB-EC"/>
</dbReference>
<dbReference type="GO" id="GO:0006122">
    <property type="term" value="P:mitochondrial electron transport, ubiquinol to cytochrome c"/>
    <property type="evidence" value="ECO:0000318"/>
    <property type="project" value="GO_Central"/>
</dbReference>
<dbReference type="CDD" id="cd03470">
    <property type="entry name" value="Rieske_cytochrome_bc1"/>
    <property type="match status" value="1"/>
</dbReference>
<dbReference type="FunFam" id="2.102.10.10:FF:000001">
    <property type="entry name" value="Cytochrome b-c1 complex subunit Rieske, mitochondrial"/>
    <property type="match status" value="1"/>
</dbReference>
<dbReference type="Gene3D" id="2.102.10.10">
    <property type="entry name" value="Rieske [2Fe-2S] iron-sulphur domain"/>
    <property type="match status" value="1"/>
</dbReference>
<dbReference type="InterPro" id="IPR017941">
    <property type="entry name" value="Rieske_2Fe-2S"/>
</dbReference>
<dbReference type="InterPro" id="IPR036922">
    <property type="entry name" value="Rieske_2Fe-2S_sf"/>
</dbReference>
<dbReference type="InterPro" id="IPR014349">
    <property type="entry name" value="Rieske_Fe-S_prot"/>
</dbReference>
<dbReference type="InterPro" id="IPR005805">
    <property type="entry name" value="Rieske_Fe-S_prot_C"/>
</dbReference>
<dbReference type="InterPro" id="IPR004192">
    <property type="entry name" value="Rieske_TM"/>
</dbReference>
<dbReference type="InterPro" id="IPR006317">
    <property type="entry name" value="Ubiquinol_cyt_c_Rdtase_Fe-S-su"/>
</dbReference>
<dbReference type="NCBIfam" id="TIGR01416">
    <property type="entry name" value="Rieske_proteo"/>
    <property type="match status" value="1"/>
</dbReference>
<dbReference type="PANTHER" id="PTHR10134">
    <property type="entry name" value="CYTOCHROME B-C1 COMPLEX SUBUNIT RIESKE, MITOCHONDRIAL"/>
    <property type="match status" value="1"/>
</dbReference>
<dbReference type="Pfam" id="PF00355">
    <property type="entry name" value="Rieske"/>
    <property type="match status" value="1"/>
</dbReference>
<dbReference type="Pfam" id="PF02921">
    <property type="entry name" value="UCR_TM"/>
    <property type="match status" value="1"/>
</dbReference>
<dbReference type="PRINTS" id="PR00162">
    <property type="entry name" value="RIESKE"/>
</dbReference>
<dbReference type="SUPFAM" id="SSF50022">
    <property type="entry name" value="ISP domain"/>
    <property type="match status" value="1"/>
</dbReference>
<dbReference type="SUPFAM" id="SSF81502">
    <property type="entry name" value="ISP transmembrane anchor"/>
    <property type="match status" value="1"/>
</dbReference>
<dbReference type="PROSITE" id="PS51296">
    <property type="entry name" value="RIESKE"/>
    <property type="match status" value="1"/>
</dbReference>
<protein>
    <recommendedName>
        <fullName>Cytochrome b-c1 complex subunit Rieske-5, mitochondrial</fullName>
        <ecNumber>7.1.1.8</ecNumber>
    </recommendedName>
    <alternativeName>
        <fullName>Complex III subunit 5-5</fullName>
    </alternativeName>
    <alternativeName>
        <fullName>Rieske iron-sulfur protein 5</fullName>
        <shortName>RISP5</shortName>
    </alternativeName>
    <alternativeName>
        <fullName>Ubiquinol-cytochrome c reductase iron-sulfur subunit 5</fullName>
    </alternativeName>
</protein>
<proteinExistence type="evidence at transcript level"/>
<name>UCRI5_TOBAC</name>
<sequence length="268" mass="29262">MLRIAGRKLSSSAAARSSSAFFTRNPFTFTDDSSSPTRSPSPTSLASQFLDQFRGFSSNSVSPAHQTGLVSDLPATVAAIKNPSSKIVYDDSNHERYPPGDPSKRAFAYFVLTGGRFVYASLVRLLILKFVLSMSASKDVLALASLEVDLSSIEPGTTVTVKWRGKPVFIRRRTDEDINLANSVDLGSLRDPQQDAERVKNPEWLVVIGVCTHLGCIPLPNAGDFGGWFCPCHGSHYDISGRIRKGPAPYNLEVPTYSFMEENKLLIG</sequence>
<reference key="1">
    <citation type="journal article" date="1994" name="Plant Cell">
        <title>Flower-enhanced expression of a nuclear-encoded mitochondrial respiratory protein is associated with changes in mitochondrion number.</title>
        <authorList>
            <person name="Huang J."/>
            <person name="Struck F."/>
            <person name="Matzinger D.F."/>
            <person name="Levings C.S. III"/>
        </authorList>
    </citation>
    <scope>NUCLEOTIDE SEQUENCE [MRNA]</scope>
    <source>
        <strain>cv. SC58</strain>
        <tissue>Flower</tissue>
    </source>
</reference>